<evidence type="ECO:0000269" key="1">
    <source>
    </source>
</evidence>
<evidence type="ECO:0000269" key="2">
    <source>
    </source>
</evidence>
<evidence type="ECO:0000305" key="3"/>
<protein>
    <recommendedName>
        <fullName>Periviscerokinin-1</fullName>
        <shortName>BlaCr-PVK-1</shortName>
        <shortName>PVK-1</shortName>
    </recommendedName>
</protein>
<dbReference type="GO" id="GO:0005576">
    <property type="term" value="C:extracellular region"/>
    <property type="evidence" value="ECO:0007669"/>
    <property type="project" value="UniProtKB-SubCell"/>
</dbReference>
<dbReference type="GO" id="GO:0007218">
    <property type="term" value="P:neuropeptide signaling pathway"/>
    <property type="evidence" value="ECO:0007669"/>
    <property type="project" value="UniProtKB-KW"/>
</dbReference>
<dbReference type="InterPro" id="IPR013231">
    <property type="entry name" value="Periviscerokinin"/>
</dbReference>
<dbReference type="Pfam" id="PF08259">
    <property type="entry name" value="Periviscerokin"/>
    <property type="match status" value="1"/>
</dbReference>
<feature type="peptide" id="PRO_0000044240" description="Periviscerokinin-1">
    <location>
        <begin position="1"/>
        <end position="11"/>
    </location>
</feature>
<feature type="modified residue" description="Threonine amide" evidence="1 2">
    <location>
        <position position="11"/>
    </location>
</feature>
<keyword id="KW-0027">Amidation</keyword>
<keyword id="KW-0903">Direct protein sequencing</keyword>
<keyword id="KW-0527">Neuropeptide</keyword>
<keyword id="KW-0964">Secreted</keyword>
<comment type="function">
    <text evidence="1">Mediates visceral muscle contractile activity (myotropic activity).</text>
</comment>
<comment type="subcellular location">
    <subcellularLocation>
        <location>Secreted</location>
    </subcellularLocation>
</comment>
<comment type="mass spectrometry" mass="1090.6" method="MALDI" evidence="1"/>
<comment type="similarity">
    <text evidence="3">Belongs to the periviscerokinin family.</text>
</comment>
<proteinExistence type="evidence at protein level"/>
<accession>P83923</accession>
<accession>P82698</accession>
<name>PVK1_BLACR</name>
<reference key="1">
    <citation type="journal article" date="2000" name="Eur. J. Biochem.">
        <title>Identification of novel periviscerokinins from single neurohaemal release sites in insects. MS/MS fragmentation complemented by Edman degradation.</title>
        <authorList>
            <person name="Predel R."/>
            <person name="Kellner R."/>
            <person name="Baggerman G."/>
            <person name="Steinmetzer T."/>
            <person name="Schoofs L."/>
        </authorList>
    </citation>
    <scope>PROTEIN SEQUENCE</scope>
    <scope>FUNCTION</scope>
    <scope>MASS SPECTROMETRY</scope>
    <scope>AMIDATION AT THR-11</scope>
    <source>
        <tissue>Abdominal perisympathetic organs</tissue>
    </source>
</reference>
<reference key="2">
    <citation type="journal article" date="2009" name="BMC Evol. Biol.">
        <title>A proteomic approach for studying insect phylogeny: CAPA peptides of ancient insect taxa (Dictyoptera, Blattoptera) as a test case.</title>
        <authorList>
            <person name="Roth S."/>
            <person name="Fromm B."/>
            <person name="Gaede G."/>
            <person name="Predel R."/>
        </authorList>
    </citation>
    <scope>PROTEIN SEQUENCE</scope>
    <scope>AMIDATION AT THR-11</scope>
    <source>
        <tissue>Abdominal perisympathetic organs</tissue>
    </source>
</reference>
<organism>
    <name type="scientific">Blaberus craniifer</name>
    <name type="common">Death's head cockroach</name>
    <dbReference type="NCBI Taxonomy" id="6982"/>
    <lineage>
        <taxon>Eukaryota</taxon>
        <taxon>Metazoa</taxon>
        <taxon>Ecdysozoa</taxon>
        <taxon>Arthropoda</taxon>
        <taxon>Hexapoda</taxon>
        <taxon>Insecta</taxon>
        <taxon>Pterygota</taxon>
        <taxon>Neoptera</taxon>
        <taxon>Polyneoptera</taxon>
        <taxon>Dictyoptera</taxon>
        <taxon>Blattodea</taxon>
        <taxon>Blaberoidea</taxon>
        <taxon>Blaberidae</taxon>
        <taxon>Blaberinae</taxon>
        <taxon>Blaberus</taxon>
    </lineage>
</organism>
<sequence length="11" mass="1091">GSSGLIPFGRT</sequence>